<gene>
    <name evidence="1" type="primary">hcp</name>
    <name type="ordered locus">YPK_2701</name>
</gene>
<proteinExistence type="inferred from homology"/>
<evidence type="ECO:0000255" key="1">
    <source>
        <dbReference type="HAMAP-Rule" id="MF_00069"/>
    </source>
</evidence>
<accession>B1JRH0</accession>
<organism>
    <name type="scientific">Yersinia pseudotuberculosis serotype O:3 (strain YPIII)</name>
    <dbReference type="NCBI Taxonomy" id="502800"/>
    <lineage>
        <taxon>Bacteria</taxon>
        <taxon>Pseudomonadati</taxon>
        <taxon>Pseudomonadota</taxon>
        <taxon>Gammaproteobacteria</taxon>
        <taxon>Enterobacterales</taxon>
        <taxon>Yersiniaceae</taxon>
        <taxon>Yersinia</taxon>
    </lineage>
</organism>
<comment type="function">
    <text evidence="1">Catalyzes the reduction of hydroxylamine to form NH(3) and H(2)O.</text>
</comment>
<comment type="catalytic activity">
    <reaction evidence="1">
        <text>A + NH4(+) + H2O = hydroxylamine + AH2 + H(+)</text>
        <dbReference type="Rhea" id="RHEA:22052"/>
        <dbReference type="ChEBI" id="CHEBI:13193"/>
        <dbReference type="ChEBI" id="CHEBI:15377"/>
        <dbReference type="ChEBI" id="CHEBI:15378"/>
        <dbReference type="ChEBI" id="CHEBI:15429"/>
        <dbReference type="ChEBI" id="CHEBI:17499"/>
        <dbReference type="ChEBI" id="CHEBI:28938"/>
        <dbReference type="EC" id="1.7.99.1"/>
    </reaction>
</comment>
<comment type="cofactor">
    <cofactor evidence="1">
        <name>[2Fe-2S] cluster</name>
        <dbReference type="ChEBI" id="CHEBI:190135"/>
    </cofactor>
    <text evidence="1">Binds 1 [2Fe-2S] cluster.</text>
</comment>
<comment type="cofactor">
    <cofactor evidence="1">
        <name>hybrid [4Fe-2O-2S] cluster</name>
        <dbReference type="ChEBI" id="CHEBI:60519"/>
    </cofactor>
    <text evidence="1">Binds 1 hybrid [4Fe-2O-2S] cluster.</text>
</comment>
<comment type="subcellular location">
    <subcellularLocation>
        <location evidence="1">Cytoplasm</location>
    </subcellularLocation>
</comment>
<comment type="similarity">
    <text evidence="1">Belongs to the HCP family.</text>
</comment>
<sequence>MFCVQCEQTIRTPAGNGCSYAQGMCGKTAETSDLQDLLVAVLQGLSAWALQARELGIIDSQIDSFAPRAFFSTLTNVNFDSDRIVEYAKDAILLRHSLAVRCRLLDSTITVDHPLAELQLVADDIPSLLQQSQQFALNNDKADVGDDIHGLRMLCLYGLKGAAAYMEHAHVLGQSDEQIYAEYHAYMAWLGTQPRDVDTLLNNAMGIGKMNFNVMAILDQGETQAYGDPQPTSVNVRPVAGKAILISGHDLKDLHMLLEQTQGTGINIYTHGEMLPAHGYPELKRYPHLVGNYGSGWQNQQTEFAKFPGPILMTSNCIIDPNVGNYGDRIWTRSIVGWPGVNHLDGENFAPVIEQALGMAGFPYSELEHLITVGFGRQTLLNAADTVIDLVASKKLRHVFLVGGCDGSRTERSYFTDFARSVPQDCIIMTLACGKYRFNKLDFGTLEGLPRLLDVGQCNDAYAAIMLAVKLSEKLGCTVNDLPLSLVLSWFEQKAIVILLTLLSLGVKNIYTGPTAPGFLTDNLMAILYEKFGMQPITTVEQDMQAILGH</sequence>
<keyword id="KW-0001">2Fe-2S</keyword>
<keyword id="KW-0963">Cytoplasm</keyword>
<keyword id="KW-0408">Iron</keyword>
<keyword id="KW-0411">Iron-sulfur</keyword>
<keyword id="KW-0479">Metal-binding</keyword>
<keyword id="KW-0560">Oxidoreductase</keyword>
<feature type="chain" id="PRO_1000092360" description="Hydroxylamine reductase">
    <location>
        <begin position="1"/>
        <end position="550"/>
    </location>
</feature>
<feature type="binding site" evidence="1">
    <location>
        <position position="3"/>
    </location>
    <ligand>
        <name>[2Fe-2S] cluster</name>
        <dbReference type="ChEBI" id="CHEBI:190135"/>
    </ligand>
</feature>
<feature type="binding site" evidence="1">
    <location>
        <position position="6"/>
    </location>
    <ligand>
        <name>[2Fe-2S] cluster</name>
        <dbReference type="ChEBI" id="CHEBI:190135"/>
    </ligand>
</feature>
<feature type="binding site" evidence="1">
    <location>
        <position position="18"/>
    </location>
    <ligand>
        <name>[2Fe-2S] cluster</name>
        <dbReference type="ChEBI" id="CHEBI:190135"/>
    </ligand>
</feature>
<feature type="binding site" evidence="1">
    <location>
        <position position="25"/>
    </location>
    <ligand>
        <name>[2Fe-2S] cluster</name>
        <dbReference type="ChEBI" id="CHEBI:190135"/>
    </ligand>
</feature>
<feature type="binding site" evidence="1">
    <location>
        <position position="249"/>
    </location>
    <ligand>
        <name>hybrid [4Fe-2O-2S] cluster</name>
        <dbReference type="ChEBI" id="CHEBI:60519"/>
    </ligand>
</feature>
<feature type="binding site" evidence="1">
    <location>
        <position position="273"/>
    </location>
    <ligand>
        <name>hybrid [4Fe-2O-2S] cluster</name>
        <dbReference type="ChEBI" id="CHEBI:60519"/>
    </ligand>
</feature>
<feature type="binding site" evidence="1">
    <location>
        <position position="317"/>
    </location>
    <ligand>
        <name>hybrid [4Fe-2O-2S] cluster</name>
        <dbReference type="ChEBI" id="CHEBI:60519"/>
    </ligand>
</feature>
<feature type="binding site" description="via persulfide group" evidence="1">
    <location>
        <position position="405"/>
    </location>
    <ligand>
        <name>hybrid [4Fe-2O-2S] cluster</name>
        <dbReference type="ChEBI" id="CHEBI:60519"/>
    </ligand>
</feature>
<feature type="binding site" evidence="1">
    <location>
        <position position="433"/>
    </location>
    <ligand>
        <name>hybrid [4Fe-2O-2S] cluster</name>
        <dbReference type="ChEBI" id="CHEBI:60519"/>
    </ligand>
</feature>
<feature type="binding site" evidence="1">
    <location>
        <position position="458"/>
    </location>
    <ligand>
        <name>hybrid [4Fe-2O-2S] cluster</name>
        <dbReference type="ChEBI" id="CHEBI:60519"/>
    </ligand>
</feature>
<feature type="binding site" evidence="1">
    <location>
        <position position="492"/>
    </location>
    <ligand>
        <name>hybrid [4Fe-2O-2S] cluster</name>
        <dbReference type="ChEBI" id="CHEBI:60519"/>
    </ligand>
</feature>
<feature type="binding site" evidence="1">
    <location>
        <position position="494"/>
    </location>
    <ligand>
        <name>hybrid [4Fe-2O-2S] cluster</name>
        <dbReference type="ChEBI" id="CHEBI:60519"/>
    </ligand>
</feature>
<feature type="modified residue" description="Cysteine persulfide" evidence="1">
    <location>
        <position position="405"/>
    </location>
</feature>
<reference key="1">
    <citation type="submission" date="2008-02" db="EMBL/GenBank/DDBJ databases">
        <title>Complete sequence of Yersinia pseudotuberculosis YPIII.</title>
        <authorList>
            <consortium name="US DOE Joint Genome Institute"/>
            <person name="Copeland A."/>
            <person name="Lucas S."/>
            <person name="Lapidus A."/>
            <person name="Glavina del Rio T."/>
            <person name="Dalin E."/>
            <person name="Tice H."/>
            <person name="Bruce D."/>
            <person name="Goodwin L."/>
            <person name="Pitluck S."/>
            <person name="Munk A.C."/>
            <person name="Brettin T."/>
            <person name="Detter J.C."/>
            <person name="Han C."/>
            <person name="Tapia R."/>
            <person name="Schmutz J."/>
            <person name="Larimer F."/>
            <person name="Land M."/>
            <person name="Hauser L."/>
            <person name="Challacombe J.F."/>
            <person name="Green L."/>
            <person name="Lindler L.E."/>
            <person name="Nikolich M.P."/>
            <person name="Richardson P."/>
        </authorList>
    </citation>
    <scope>NUCLEOTIDE SEQUENCE [LARGE SCALE GENOMIC DNA]</scope>
    <source>
        <strain>YPIII</strain>
    </source>
</reference>
<dbReference type="EC" id="1.7.99.1" evidence="1"/>
<dbReference type="EMBL" id="CP000950">
    <property type="protein sequence ID" value="ACA68978.1"/>
    <property type="molecule type" value="Genomic_DNA"/>
</dbReference>
<dbReference type="RefSeq" id="WP_011192048.1">
    <property type="nucleotide sequence ID" value="NZ_CP009792.1"/>
</dbReference>
<dbReference type="SMR" id="B1JRH0"/>
<dbReference type="KEGG" id="ypy:YPK_2701"/>
<dbReference type="PATRIC" id="fig|502800.11.peg.3405"/>
<dbReference type="GO" id="GO:0005737">
    <property type="term" value="C:cytoplasm"/>
    <property type="evidence" value="ECO:0007669"/>
    <property type="project" value="UniProtKB-SubCell"/>
</dbReference>
<dbReference type="GO" id="GO:0051537">
    <property type="term" value="F:2 iron, 2 sulfur cluster binding"/>
    <property type="evidence" value="ECO:0007669"/>
    <property type="project" value="UniProtKB-KW"/>
</dbReference>
<dbReference type="GO" id="GO:0050418">
    <property type="term" value="F:hydroxylamine reductase activity"/>
    <property type="evidence" value="ECO:0007669"/>
    <property type="project" value="UniProtKB-UniRule"/>
</dbReference>
<dbReference type="GO" id="GO:0046872">
    <property type="term" value="F:metal ion binding"/>
    <property type="evidence" value="ECO:0007669"/>
    <property type="project" value="UniProtKB-KW"/>
</dbReference>
<dbReference type="GO" id="GO:0004601">
    <property type="term" value="F:peroxidase activity"/>
    <property type="evidence" value="ECO:0007669"/>
    <property type="project" value="TreeGrafter"/>
</dbReference>
<dbReference type="GO" id="GO:0042542">
    <property type="term" value="P:response to hydrogen peroxide"/>
    <property type="evidence" value="ECO:0007669"/>
    <property type="project" value="TreeGrafter"/>
</dbReference>
<dbReference type="CDD" id="cd01914">
    <property type="entry name" value="HCP"/>
    <property type="match status" value="1"/>
</dbReference>
<dbReference type="FunFam" id="1.20.1270.20:FF:000001">
    <property type="entry name" value="Hydroxylamine reductase"/>
    <property type="match status" value="1"/>
</dbReference>
<dbReference type="FunFam" id="1.20.1270.20:FF:000002">
    <property type="entry name" value="Hydroxylamine reductase"/>
    <property type="match status" value="1"/>
</dbReference>
<dbReference type="FunFam" id="3.40.50.2030:FF:000001">
    <property type="entry name" value="Hydroxylamine reductase"/>
    <property type="match status" value="1"/>
</dbReference>
<dbReference type="FunFam" id="3.40.50.2030:FF:000002">
    <property type="entry name" value="Hydroxylamine reductase"/>
    <property type="match status" value="1"/>
</dbReference>
<dbReference type="Gene3D" id="1.20.1270.20">
    <property type="match status" value="2"/>
</dbReference>
<dbReference type="Gene3D" id="3.40.50.2030">
    <property type="match status" value="2"/>
</dbReference>
<dbReference type="HAMAP" id="MF_00069">
    <property type="entry name" value="Hydroxylam_reduct"/>
    <property type="match status" value="1"/>
</dbReference>
<dbReference type="InterPro" id="IPR004137">
    <property type="entry name" value="HCP/CODH"/>
</dbReference>
<dbReference type="InterPro" id="IPR010048">
    <property type="entry name" value="Hydroxylam_reduct"/>
</dbReference>
<dbReference type="InterPro" id="IPR016099">
    <property type="entry name" value="Prismane-like_a/b-sand"/>
</dbReference>
<dbReference type="InterPro" id="IPR011254">
    <property type="entry name" value="Prismane-like_sf"/>
</dbReference>
<dbReference type="InterPro" id="IPR016100">
    <property type="entry name" value="Prismane_a-bundle"/>
</dbReference>
<dbReference type="NCBIfam" id="TIGR01703">
    <property type="entry name" value="hybrid_clust"/>
    <property type="match status" value="1"/>
</dbReference>
<dbReference type="NCBIfam" id="NF003658">
    <property type="entry name" value="PRK05290.1"/>
    <property type="match status" value="1"/>
</dbReference>
<dbReference type="PANTHER" id="PTHR30109">
    <property type="entry name" value="HYDROXYLAMINE REDUCTASE"/>
    <property type="match status" value="1"/>
</dbReference>
<dbReference type="PANTHER" id="PTHR30109:SF0">
    <property type="entry name" value="HYDROXYLAMINE REDUCTASE"/>
    <property type="match status" value="1"/>
</dbReference>
<dbReference type="Pfam" id="PF03063">
    <property type="entry name" value="Prismane"/>
    <property type="match status" value="1"/>
</dbReference>
<dbReference type="PIRSF" id="PIRSF000076">
    <property type="entry name" value="HCP"/>
    <property type="match status" value="1"/>
</dbReference>
<dbReference type="SUPFAM" id="SSF56821">
    <property type="entry name" value="Prismane protein-like"/>
    <property type="match status" value="1"/>
</dbReference>
<protein>
    <recommendedName>
        <fullName evidence="1">Hydroxylamine reductase</fullName>
        <ecNumber evidence="1">1.7.99.1</ecNumber>
    </recommendedName>
    <alternativeName>
        <fullName evidence="1">Hybrid-cluster protein</fullName>
        <shortName evidence="1">HCP</shortName>
    </alternativeName>
    <alternativeName>
        <fullName evidence="1">Prismane protein</fullName>
    </alternativeName>
</protein>
<name>HCP_YERPY</name>